<sequence length="194" mass="21089">MSPQGPGTAVDVDDEVVLLDPDRRPCGTAPRLAVHGLDTPLHLAFSSYLFDAAGRLLVTRRALGKRTWPGVWTNSCCGHPRPGEDIALAVERRVDQELRLALTDLHCALPDFAYRATAADGLVENEVCPVYVARAVGDPDPDPAEVVEWRWVDWESYRQAALAAPWALSPWSVDQMTAFGQAAHPLTAALRAVG</sequence>
<comment type="function">
    <text evidence="1">Catalyzes the 1,3-allylic rearrangement of the homoallylic substrate isopentenyl (IPP) to its highly electrophilic allylic isomer, dimethylallyl diphosphate (DMAPP).</text>
</comment>
<comment type="catalytic activity">
    <reaction evidence="1">
        <text>isopentenyl diphosphate = dimethylallyl diphosphate</text>
        <dbReference type="Rhea" id="RHEA:23284"/>
        <dbReference type="ChEBI" id="CHEBI:57623"/>
        <dbReference type="ChEBI" id="CHEBI:128769"/>
        <dbReference type="EC" id="5.3.3.2"/>
    </reaction>
</comment>
<comment type="cofactor">
    <cofactor evidence="1">
        <name>Mg(2+)</name>
        <dbReference type="ChEBI" id="CHEBI:18420"/>
    </cofactor>
    <text evidence="1">Binds 1 Mg(2+) ion per subunit. The magnesium ion binds only when substrate is bound.</text>
</comment>
<comment type="cofactor">
    <cofactor evidence="1">
        <name>Mn(2+)</name>
        <dbReference type="ChEBI" id="CHEBI:29035"/>
    </cofactor>
    <text evidence="1">Binds 1 Mn(2+) ion per subunit.</text>
</comment>
<comment type="pathway">
    <text evidence="1">Isoprenoid biosynthesis; dimethylallyl diphosphate biosynthesis; dimethylallyl diphosphate from isopentenyl diphosphate: step 1/1.</text>
</comment>
<comment type="subcellular location">
    <subcellularLocation>
        <location evidence="1">Cytoplasm</location>
    </subcellularLocation>
</comment>
<comment type="similarity">
    <text evidence="1">Belongs to the IPP isomerase type 1 family.</text>
</comment>
<accession>Q0RBQ7</accession>
<name>IDI_FRAAA</name>
<feature type="chain" id="PRO_0000325215" description="Isopentenyl-diphosphate Delta-isomerase">
    <location>
        <begin position="1"/>
        <end position="194"/>
    </location>
</feature>
<feature type="domain" description="Nudix hydrolase">
    <location>
        <begin position="40"/>
        <end position="174"/>
    </location>
</feature>
<feature type="active site" evidence="1">
    <location>
        <position position="77"/>
    </location>
</feature>
<feature type="active site" evidence="1">
    <location>
        <position position="126"/>
    </location>
</feature>
<feature type="binding site" evidence="1">
    <location>
        <position position="35"/>
    </location>
    <ligand>
        <name>Mn(2+)</name>
        <dbReference type="ChEBI" id="CHEBI:29035"/>
    </ligand>
</feature>
<feature type="binding site" evidence="1">
    <location>
        <position position="42"/>
    </location>
    <ligand>
        <name>Mn(2+)</name>
        <dbReference type="ChEBI" id="CHEBI:29035"/>
    </ligand>
</feature>
<feature type="binding site" evidence="1">
    <location>
        <position position="79"/>
    </location>
    <ligand>
        <name>Mn(2+)</name>
        <dbReference type="ChEBI" id="CHEBI:29035"/>
    </ligand>
</feature>
<feature type="binding site" evidence="1">
    <location>
        <position position="97"/>
    </location>
    <ligand>
        <name>Mg(2+)</name>
        <dbReference type="ChEBI" id="CHEBI:18420"/>
    </ligand>
</feature>
<feature type="binding site" evidence="1">
    <location>
        <position position="124"/>
    </location>
    <ligand>
        <name>Mn(2+)</name>
        <dbReference type="ChEBI" id="CHEBI:29035"/>
    </ligand>
</feature>
<feature type="binding site" evidence="1">
    <location>
        <position position="126"/>
    </location>
    <ligand>
        <name>Mn(2+)</name>
        <dbReference type="ChEBI" id="CHEBI:29035"/>
    </ligand>
</feature>
<keyword id="KW-0963">Cytoplasm</keyword>
<keyword id="KW-0413">Isomerase</keyword>
<keyword id="KW-0414">Isoprene biosynthesis</keyword>
<keyword id="KW-0460">Magnesium</keyword>
<keyword id="KW-0464">Manganese</keyword>
<keyword id="KW-0479">Metal-binding</keyword>
<keyword id="KW-1185">Reference proteome</keyword>
<evidence type="ECO:0000255" key="1">
    <source>
        <dbReference type="HAMAP-Rule" id="MF_00202"/>
    </source>
</evidence>
<proteinExistence type="inferred from homology"/>
<protein>
    <recommendedName>
        <fullName evidence="1">Isopentenyl-diphosphate Delta-isomerase</fullName>
        <shortName evidence="1">IPP isomerase</shortName>
        <ecNumber evidence="1">5.3.3.2</ecNumber>
    </recommendedName>
    <alternativeName>
        <fullName evidence="1">IPP:DMAPP isomerase</fullName>
    </alternativeName>
    <alternativeName>
        <fullName evidence="1">Isopentenyl pyrophosphate isomerase</fullName>
    </alternativeName>
</protein>
<dbReference type="EC" id="5.3.3.2" evidence="1"/>
<dbReference type="EMBL" id="CT573213">
    <property type="protein sequence ID" value="CAJ65127.1"/>
    <property type="molecule type" value="Genomic_DNA"/>
</dbReference>
<dbReference type="RefSeq" id="WP_011607545.1">
    <property type="nucleotide sequence ID" value="NC_008278.1"/>
</dbReference>
<dbReference type="SMR" id="Q0RBQ7"/>
<dbReference type="STRING" id="326424.FRAAL6504"/>
<dbReference type="KEGG" id="fal:FRAAL6504"/>
<dbReference type="eggNOG" id="COG1443">
    <property type="taxonomic scope" value="Bacteria"/>
</dbReference>
<dbReference type="HOGENOM" id="CLU_060552_2_0_11"/>
<dbReference type="OrthoDB" id="9809458at2"/>
<dbReference type="UniPathway" id="UPA00059">
    <property type="reaction ID" value="UER00104"/>
</dbReference>
<dbReference type="Proteomes" id="UP000000657">
    <property type="component" value="Chromosome"/>
</dbReference>
<dbReference type="GO" id="GO:0005737">
    <property type="term" value="C:cytoplasm"/>
    <property type="evidence" value="ECO:0007669"/>
    <property type="project" value="UniProtKB-SubCell"/>
</dbReference>
<dbReference type="GO" id="GO:0004452">
    <property type="term" value="F:isopentenyl-diphosphate delta-isomerase activity"/>
    <property type="evidence" value="ECO:0007669"/>
    <property type="project" value="UniProtKB-UniRule"/>
</dbReference>
<dbReference type="GO" id="GO:0046872">
    <property type="term" value="F:metal ion binding"/>
    <property type="evidence" value="ECO:0007669"/>
    <property type="project" value="UniProtKB-KW"/>
</dbReference>
<dbReference type="GO" id="GO:0050992">
    <property type="term" value="P:dimethylallyl diphosphate biosynthetic process"/>
    <property type="evidence" value="ECO:0007669"/>
    <property type="project" value="UniProtKB-UniRule"/>
</dbReference>
<dbReference type="GO" id="GO:0008299">
    <property type="term" value="P:isoprenoid biosynthetic process"/>
    <property type="evidence" value="ECO:0007669"/>
    <property type="project" value="UniProtKB-KW"/>
</dbReference>
<dbReference type="CDD" id="cd02885">
    <property type="entry name" value="NUDIX_IPP_Isomerase"/>
    <property type="match status" value="1"/>
</dbReference>
<dbReference type="FunFam" id="3.90.79.10:FF:000009">
    <property type="entry name" value="Isopentenyl-diphosphate Delta-isomerase"/>
    <property type="match status" value="1"/>
</dbReference>
<dbReference type="Gene3D" id="3.90.79.10">
    <property type="entry name" value="Nucleoside Triphosphate Pyrophosphohydrolase"/>
    <property type="match status" value="1"/>
</dbReference>
<dbReference type="HAMAP" id="MF_00202">
    <property type="entry name" value="Idi"/>
    <property type="match status" value="1"/>
</dbReference>
<dbReference type="InterPro" id="IPR056375">
    <property type="entry name" value="Idi_bact"/>
</dbReference>
<dbReference type="InterPro" id="IPR011876">
    <property type="entry name" value="IsopentenylPP_isomerase_typ1"/>
</dbReference>
<dbReference type="InterPro" id="IPR015797">
    <property type="entry name" value="NUDIX_hydrolase-like_dom_sf"/>
</dbReference>
<dbReference type="InterPro" id="IPR000086">
    <property type="entry name" value="NUDIX_hydrolase_dom"/>
</dbReference>
<dbReference type="NCBIfam" id="TIGR02150">
    <property type="entry name" value="IPP_isom_1"/>
    <property type="match status" value="1"/>
</dbReference>
<dbReference type="NCBIfam" id="NF002995">
    <property type="entry name" value="PRK03759.1"/>
    <property type="match status" value="1"/>
</dbReference>
<dbReference type="PANTHER" id="PTHR10885">
    <property type="entry name" value="ISOPENTENYL-DIPHOSPHATE DELTA-ISOMERASE"/>
    <property type="match status" value="1"/>
</dbReference>
<dbReference type="PANTHER" id="PTHR10885:SF0">
    <property type="entry name" value="ISOPENTENYL-DIPHOSPHATE DELTA-ISOMERASE"/>
    <property type="match status" value="1"/>
</dbReference>
<dbReference type="Pfam" id="PF00293">
    <property type="entry name" value="NUDIX"/>
    <property type="match status" value="1"/>
</dbReference>
<dbReference type="PIRSF" id="PIRSF018427">
    <property type="entry name" value="Isopntndiph_ism"/>
    <property type="match status" value="1"/>
</dbReference>
<dbReference type="SUPFAM" id="SSF55811">
    <property type="entry name" value="Nudix"/>
    <property type="match status" value="1"/>
</dbReference>
<dbReference type="PROSITE" id="PS51462">
    <property type="entry name" value="NUDIX"/>
    <property type="match status" value="1"/>
</dbReference>
<gene>
    <name evidence="1" type="primary">idi</name>
    <name type="ordered locus">FRAAL6504</name>
</gene>
<organism>
    <name type="scientific">Frankia alni (strain DSM 45986 / CECT 9034 / ACN14a)</name>
    <dbReference type="NCBI Taxonomy" id="326424"/>
    <lineage>
        <taxon>Bacteria</taxon>
        <taxon>Bacillati</taxon>
        <taxon>Actinomycetota</taxon>
        <taxon>Actinomycetes</taxon>
        <taxon>Frankiales</taxon>
        <taxon>Frankiaceae</taxon>
        <taxon>Frankia</taxon>
    </lineage>
</organism>
<reference key="1">
    <citation type="journal article" date="2007" name="Genome Res.">
        <title>Genome characteristics of facultatively symbiotic Frankia sp. strains reflect host range and host plant biogeography.</title>
        <authorList>
            <person name="Normand P."/>
            <person name="Lapierre P."/>
            <person name="Tisa L.S."/>
            <person name="Gogarten J.P."/>
            <person name="Alloisio N."/>
            <person name="Bagnarol E."/>
            <person name="Bassi C.A."/>
            <person name="Berry A.M."/>
            <person name="Bickhart D.M."/>
            <person name="Choisne N."/>
            <person name="Couloux A."/>
            <person name="Cournoyer B."/>
            <person name="Cruveiller S."/>
            <person name="Daubin V."/>
            <person name="Demange N."/>
            <person name="Francino M.P."/>
            <person name="Goltsman E."/>
            <person name="Huang Y."/>
            <person name="Kopp O.R."/>
            <person name="Labarre L."/>
            <person name="Lapidus A."/>
            <person name="Lavire C."/>
            <person name="Marechal J."/>
            <person name="Martinez M."/>
            <person name="Mastronunzio J.E."/>
            <person name="Mullin B.C."/>
            <person name="Niemann J."/>
            <person name="Pujic P."/>
            <person name="Rawnsley T."/>
            <person name="Rouy Z."/>
            <person name="Schenowitz C."/>
            <person name="Sellstedt A."/>
            <person name="Tavares F."/>
            <person name="Tomkins J.P."/>
            <person name="Vallenet D."/>
            <person name="Valverde C."/>
            <person name="Wall L.G."/>
            <person name="Wang Y."/>
            <person name="Medigue C."/>
            <person name="Benson D.R."/>
        </authorList>
    </citation>
    <scope>NUCLEOTIDE SEQUENCE [LARGE SCALE GENOMIC DNA]</scope>
    <source>
        <strain>DSM 45986 / CECT 9034 / ACN14a</strain>
    </source>
</reference>